<keyword id="KW-0028">Amino-acid biosynthesis</keyword>
<keyword id="KW-0032">Aminotransferase</keyword>
<keyword id="KW-0963">Cytoplasm</keyword>
<keyword id="KW-0663">Pyridoxal phosphate</keyword>
<keyword id="KW-0664">Pyridoxine biosynthesis</keyword>
<keyword id="KW-1185">Reference proteome</keyword>
<keyword id="KW-0718">Serine biosynthesis</keyword>
<keyword id="KW-0808">Transferase</keyword>
<feature type="chain" id="PRO_1000058211" description="Phosphoserine aminotransferase">
    <location>
        <begin position="1"/>
        <end position="356"/>
    </location>
</feature>
<feature type="binding site" evidence="1">
    <location>
        <position position="41"/>
    </location>
    <ligand>
        <name>L-glutamate</name>
        <dbReference type="ChEBI" id="CHEBI:29985"/>
    </ligand>
</feature>
<feature type="binding site" evidence="1">
    <location>
        <begin position="76"/>
        <end position="77"/>
    </location>
    <ligand>
        <name>pyridoxal 5'-phosphate</name>
        <dbReference type="ChEBI" id="CHEBI:597326"/>
    </ligand>
</feature>
<feature type="binding site" evidence="1">
    <location>
        <position position="102"/>
    </location>
    <ligand>
        <name>pyridoxal 5'-phosphate</name>
        <dbReference type="ChEBI" id="CHEBI:597326"/>
    </ligand>
</feature>
<feature type="binding site" evidence="1">
    <location>
        <position position="150"/>
    </location>
    <ligand>
        <name>pyridoxal 5'-phosphate</name>
        <dbReference type="ChEBI" id="CHEBI:597326"/>
    </ligand>
</feature>
<feature type="binding site" evidence="1">
    <location>
        <position position="169"/>
    </location>
    <ligand>
        <name>pyridoxal 5'-phosphate</name>
        <dbReference type="ChEBI" id="CHEBI:597326"/>
    </ligand>
</feature>
<feature type="binding site" evidence="1">
    <location>
        <position position="192"/>
    </location>
    <ligand>
        <name>pyridoxal 5'-phosphate</name>
        <dbReference type="ChEBI" id="CHEBI:597326"/>
    </ligand>
</feature>
<feature type="binding site" evidence="1">
    <location>
        <begin position="234"/>
        <end position="235"/>
    </location>
    <ligand>
        <name>pyridoxal 5'-phosphate</name>
        <dbReference type="ChEBI" id="CHEBI:597326"/>
    </ligand>
</feature>
<feature type="modified residue" description="N6-(pyridoxal phosphate)lysine" evidence="1">
    <location>
        <position position="193"/>
    </location>
</feature>
<comment type="function">
    <text evidence="1">Catalyzes the reversible conversion of 3-phosphohydroxypyruvate to phosphoserine and of 3-hydroxy-2-oxo-4-phosphonooxybutanoate to phosphohydroxythreonine.</text>
</comment>
<comment type="catalytic activity">
    <reaction evidence="1">
        <text>O-phospho-L-serine + 2-oxoglutarate = 3-phosphooxypyruvate + L-glutamate</text>
        <dbReference type="Rhea" id="RHEA:14329"/>
        <dbReference type="ChEBI" id="CHEBI:16810"/>
        <dbReference type="ChEBI" id="CHEBI:18110"/>
        <dbReference type="ChEBI" id="CHEBI:29985"/>
        <dbReference type="ChEBI" id="CHEBI:57524"/>
        <dbReference type="EC" id="2.6.1.52"/>
    </reaction>
</comment>
<comment type="catalytic activity">
    <reaction evidence="1">
        <text>4-(phosphooxy)-L-threonine + 2-oxoglutarate = (R)-3-hydroxy-2-oxo-4-phosphooxybutanoate + L-glutamate</text>
        <dbReference type="Rhea" id="RHEA:16573"/>
        <dbReference type="ChEBI" id="CHEBI:16810"/>
        <dbReference type="ChEBI" id="CHEBI:29985"/>
        <dbReference type="ChEBI" id="CHEBI:58452"/>
        <dbReference type="ChEBI" id="CHEBI:58538"/>
        <dbReference type="EC" id="2.6.1.52"/>
    </reaction>
</comment>
<comment type="cofactor">
    <cofactor evidence="1">
        <name>pyridoxal 5'-phosphate</name>
        <dbReference type="ChEBI" id="CHEBI:597326"/>
    </cofactor>
    <text evidence="1">Binds 1 pyridoxal phosphate per subunit.</text>
</comment>
<comment type="pathway">
    <text evidence="1">Amino-acid biosynthesis; L-serine biosynthesis; L-serine from 3-phospho-D-glycerate: step 2/3.</text>
</comment>
<comment type="pathway">
    <text evidence="1">Cofactor biosynthesis; pyridoxine 5'-phosphate biosynthesis; pyridoxine 5'-phosphate from D-erythrose 4-phosphate: step 3/5.</text>
</comment>
<comment type="subunit">
    <text evidence="1">Homodimer.</text>
</comment>
<comment type="subcellular location">
    <subcellularLocation>
        <location evidence="1">Cytoplasm</location>
    </subcellularLocation>
</comment>
<comment type="similarity">
    <text evidence="1">Belongs to the class-V pyridoxal-phosphate-dependent aminotransferase family. SerC subfamily.</text>
</comment>
<dbReference type="EC" id="2.6.1.52" evidence="1"/>
<dbReference type="EMBL" id="AM398681">
    <property type="protein sequence ID" value="CAL42745.1"/>
    <property type="molecule type" value="Genomic_DNA"/>
</dbReference>
<dbReference type="RefSeq" id="WP_011962801.1">
    <property type="nucleotide sequence ID" value="NC_009613.3"/>
</dbReference>
<dbReference type="RefSeq" id="YP_001295561.1">
    <property type="nucleotide sequence ID" value="NC_009613.3"/>
</dbReference>
<dbReference type="SMR" id="A6GXC2"/>
<dbReference type="STRING" id="402612.FP0640"/>
<dbReference type="EnsemblBacteria" id="CAL42745">
    <property type="protein sequence ID" value="CAL42745"/>
    <property type="gene ID" value="FP0640"/>
</dbReference>
<dbReference type="GeneID" id="66552679"/>
<dbReference type="KEGG" id="fps:FP0640"/>
<dbReference type="PATRIC" id="fig|402612.5.peg.658"/>
<dbReference type="eggNOG" id="COG1932">
    <property type="taxonomic scope" value="Bacteria"/>
</dbReference>
<dbReference type="HOGENOM" id="CLU_034866_0_2_10"/>
<dbReference type="OrthoDB" id="9809412at2"/>
<dbReference type="UniPathway" id="UPA00135">
    <property type="reaction ID" value="UER00197"/>
</dbReference>
<dbReference type="UniPathway" id="UPA00244">
    <property type="reaction ID" value="UER00311"/>
</dbReference>
<dbReference type="Proteomes" id="UP000006394">
    <property type="component" value="Chromosome"/>
</dbReference>
<dbReference type="GO" id="GO:0005737">
    <property type="term" value="C:cytoplasm"/>
    <property type="evidence" value="ECO:0007669"/>
    <property type="project" value="UniProtKB-SubCell"/>
</dbReference>
<dbReference type="GO" id="GO:0004648">
    <property type="term" value="F:O-phospho-L-serine:2-oxoglutarate aminotransferase activity"/>
    <property type="evidence" value="ECO:0007669"/>
    <property type="project" value="UniProtKB-UniRule"/>
</dbReference>
<dbReference type="GO" id="GO:0030170">
    <property type="term" value="F:pyridoxal phosphate binding"/>
    <property type="evidence" value="ECO:0007669"/>
    <property type="project" value="UniProtKB-UniRule"/>
</dbReference>
<dbReference type="GO" id="GO:0006564">
    <property type="term" value="P:L-serine biosynthetic process"/>
    <property type="evidence" value="ECO:0007669"/>
    <property type="project" value="UniProtKB-UniRule"/>
</dbReference>
<dbReference type="GO" id="GO:0008615">
    <property type="term" value="P:pyridoxine biosynthetic process"/>
    <property type="evidence" value="ECO:0007669"/>
    <property type="project" value="UniProtKB-UniRule"/>
</dbReference>
<dbReference type="FunFam" id="3.40.640.10:FF:000010">
    <property type="entry name" value="Phosphoserine aminotransferase"/>
    <property type="match status" value="1"/>
</dbReference>
<dbReference type="FunFam" id="3.90.1150.10:FF:000006">
    <property type="entry name" value="Phosphoserine aminotransferase"/>
    <property type="match status" value="1"/>
</dbReference>
<dbReference type="Gene3D" id="3.90.1150.10">
    <property type="entry name" value="Aspartate Aminotransferase, domain 1"/>
    <property type="match status" value="1"/>
</dbReference>
<dbReference type="Gene3D" id="3.40.640.10">
    <property type="entry name" value="Type I PLP-dependent aspartate aminotransferase-like (Major domain)"/>
    <property type="match status" value="1"/>
</dbReference>
<dbReference type="HAMAP" id="MF_00160">
    <property type="entry name" value="SerC_aminotrans_5"/>
    <property type="match status" value="1"/>
</dbReference>
<dbReference type="InterPro" id="IPR000192">
    <property type="entry name" value="Aminotrans_V_dom"/>
</dbReference>
<dbReference type="InterPro" id="IPR020578">
    <property type="entry name" value="Aminotrans_V_PyrdxlP_BS"/>
</dbReference>
<dbReference type="InterPro" id="IPR022278">
    <property type="entry name" value="Pser_aminoTfrase"/>
</dbReference>
<dbReference type="InterPro" id="IPR015424">
    <property type="entry name" value="PyrdxlP-dep_Trfase"/>
</dbReference>
<dbReference type="InterPro" id="IPR015421">
    <property type="entry name" value="PyrdxlP-dep_Trfase_major"/>
</dbReference>
<dbReference type="InterPro" id="IPR015422">
    <property type="entry name" value="PyrdxlP-dep_Trfase_small"/>
</dbReference>
<dbReference type="NCBIfam" id="NF003764">
    <property type="entry name" value="PRK05355.1"/>
    <property type="match status" value="1"/>
</dbReference>
<dbReference type="PANTHER" id="PTHR43247">
    <property type="entry name" value="PHOSPHOSERINE AMINOTRANSFERASE"/>
    <property type="match status" value="1"/>
</dbReference>
<dbReference type="PANTHER" id="PTHR43247:SF1">
    <property type="entry name" value="PHOSPHOSERINE AMINOTRANSFERASE"/>
    <property type="match status" value="1"/>
</dbReference>
<dbReference type="Pfam" id="PF00266">
    <property type="entry name" value="Aminotran_5"/>
    <property type="match status" value="1"/>
</dbReference>
<dbReference type="PIRSF" id="PIRSF000525">
    <property type="entry name" value="SerC"/>
    <property type="match status" value="1"/>
</dbReference>
<dbReference type="SUPFAM" id="SSF53383">
    <property type="entry name" value="PLP-dependent transferases"/>
    <property type="match status" value="1"/>
</dbReference>
<dbReference type="PROSITE" id="PS00595">
    <property type="entry name" value="AA_TRANSFER_CLASS_5"/>
    <property type="match status" value="1"/>
</dbReference>
<sequence length="356" mass="39361">MKKHNYSAGPCILPQEVFEKSAQAILDFNHSGLSLLEISHRSKDFVAVMEEARALVLELLGLKGKGYQALFLAGGASLEFLMVPYNLMKENGKAAYLDTGTWASGAIKEAKHFGETVVIASSKEENYNHIPKNYSIPSDANYFHCTSNNTIFGTQMKSFPEVNIPVVCDMSSDIFSRVLDFSKFDLIYAGAQKNMGPAGTTLVIVKEEILGKTGRYIPSMLDYEKHIKAESMYNTPPVFPIYASLLTLQWLKNLGGISAIEKINNAKANLLYSEIDRNTLFKGTANAEDRSNMNATFLLNNKNHTELFDKMWAAAGISGLSGHRSVGGYRASMYNALPLESVQVLVNVMKELENKI</sequence>
<gene>
    <name evidence="1" type="primary">serC</name>
    <name type="ordered locus">FP0640</name>
</gene>
<organism>
    <name type="scientific">Flavobacterium psychrophilum (strain ATCC 49511 / DSM 21280 / CIP 103535 / JIP02/86)</name>
    <dbReference type="NCBI Taxonomy" id="402612"/>
    <lineage>
        <taxon>Bacteria</taxon>
        <taxon>Pseudomonadati</taxon>
        <taxon>Bacteroidota</taxon>
        <taxon>Flavobacteriia</taxon>
        <taxon>Flavobacteriales</taxon>
        <taxon>Flavobacteriaceae</taxon>
        <taxon>Flavobacterium</taxon>
    </lineage>
</organism>
<protein>
    <recommendedName>
        <fullName evidence="1">Phosphoserine aminotransferase</fullName>
        <ecNumber evidence="1">2.6.1.52</ecNumber>
    </recommendedName>
    <alternativeName>
        <fullName evidence="1">Phosphohydroxythreonine aminotransferase</fullName>
        <shortName evidence="1">PSAT</shortName>
    </alternativeName>
</protein>
<name>SERC_FLAPJ</name>
<proteinExistence type="inferred from homology"/>
<reference key="1">
    <citation type="journal article" date="2007" name="Nat. Biotechnol.">
        <title>Complete genome sequence of the fish pathogen Flavobacterium psychrophilum.</title>
        <authorList>
            <person name="Duchaud E."/>
            <person name="Boussaha M."/>
            <person name="Loux V."/>
            <person name="Bernardet J.-F."/>
            <person name="Michel C."/>
            <person name="Kerouault B."/>
            <person name="Mondot S."/>
            <person name="Nicolas P."/>
            <person name="Bossy R."/>
            <person name="Caron C."/>
            <person name="Bessieres P."/>
            <person name="Gibrat J.-F."/>
            <person name="Claverol S."/>
            <person name="Dumetz F."/>
            <person name="Le Henaff M."/>
            <person name="Benmansour A."/>
        </authorList>
    </citation>
    <scope>NUCLEOTIDE SEQUENCE [LARGE SCALE GENOMIC DNA]</scope>
    <source>
        <strain>ATCC 49511 / DSM 21280 / CIP 103535 / JIP02/86</strain>
    </source>
</reference>
<evidence type="ECO:0000255" key="1">
    <source>
        <dbReference type="HAMAP-Rule" id="MF_00160"/>
    </source>
</evidence>
<accession>A6GXC2</accession>